<proteinExistence type="inferred from homology"/>
<protein>
    <recommendedName>
        <fullName evidence="1">Gamma-glutamyl phosphate reductase</fullName>
        <shortName evidence="1">GPR</shortName>
        <ecNumber evidence="1">1.2.1.41</ecNumber>
    </recommendedName>
    <alternativeName>
        <fullName evidence="1">Glutamate-5-semialdehyde dehydrogenase</fullName>
    </alternativeName>
    <alternativeName>
        <fullName evidence="1">Glutamyl-gamma-semialdehyde dehydrogenase</fullName>
        <shortName evidence="1">GSA dehydrogenase</shortName>
    </alternativeName>
</protein>
<evidence type="ECO:0000255" key="1">
    <source>
        <dbReference type="HAMAP-Rule" id="MF_00412"/>
    </source>
</evidence>
<comment type="function">
    <text evidence="1">Catalyzes the NADPH-dependent reduction of L-glutamate 5-phosphate into L-glutamate 5-semialdehyde and phosphate. The product spontaneously undergoes cyclization to form 1-pyrroline-5-carboxylate.</text>
</comment>
<comment type="catalytic activity">
    <reaction evidence="1">
        <text>L-glutamate 5-semialdehyde + phosphate + NADP(+) = L-glutamyl 5-phosphate + NADPH + H(+)</text>
        <dbReference type="Rhea" id="RHEA:19541"/>
        <dbReference type="ChEBI" id="CHEBI:15378"/>
        <dbReference type="ChEBI" id="CHEBI:43474"/>
        <dbReference type="ChEBI" id="CHEBI:57783"/>
        <dbReference type="ChEBI" id="CHEBI:58066"/>
        <dbReference type="ChEBI" id="CHEBI:58274"/>
        <dbReference type="ChEBI" id="CHEBI:58349"/>
        <dbReference type="EC" id="1.2.1.41"/>
    </reaction>
</comment>
<comment type="pathway">
    <text evidence="1">Amino-acid biosynthesis; L-proline biosynthesis; L-glutamate 5-semialdehyde from L-glutamate: step 2/2.</text>
</comment>
<comment type="subcellular location">
    <subcellularLocation>
        <location evidence="1">Cytoplasm</location>
    </subcellularLocation>
</comment>
<comment type="similarity">
    <text evidence="1">Belongs to the gamma-glutamyl phosphate reductase family.</text>
</comment>
<feature type="chain" id="PRO_0000189783" description="Gamma-glutamyl phosphate reductase">
    <location>
        <begin position="1"/>
        <end position="417"/>
    </location>
</feature>
<gene>
    <name evidence="1" type="primary">proA</name>
    <name type="ordered locus">gbs0274</name>
</gene>
<organism>
    <name type="scientific">Streptococcus agalactiae serotype III (strain NEM316)</name>
    <dbReference type="NCBI Taxonomy" id="211110"/>
    <lineage>
        <taxon>Bacteria</taxon>
        <taxon>Bacillati</taxon>
        <taxon>Bacillota</taxon>
        <taxon>Bacilli</taxon>
        <taxon>Lactobacillales</taxon>
        <taxon>Streptococcaceae</taxon>
        <taxon>Streptococcus</taxon>
    </lineage>
</organism>
<dbReference type="EC" id="1.2.1.41" evidence="1"/>
<dbReference type="EMBL" id="AL766844">
    <property type="protein sequence ID" value="CAD45919.1"/>
    <property type="molecule type" value="Genomic_DNA"/>
</dbReference>
<dbReference type="RefSeq" id="WP_000221008.1">
    <property type="nucleotide sequence ID" value="NC_004368.1"/>
</dbReference>
<dbReference type="SMR" id="Q8E783"/>
<dbReference type="KEGG" id="san:proA"/>
<dbReference type="eggNOG" id="COG0014">
    <property type="taxonomic scope" value="Bacteria"/>
</dbReference>
<dbReference type="HOGENOM" id="CLU_030231_0_0_9"/>
<dbReference type="UniPathway" id="UPA00098">
    <property type="reaction ID" value="UER00360"/>
</dbReference>
<dbReference type="Proteomes" id="UP000000823">
    <property type="component" value="Chromosome"/>
</dbReference>
<dbReference type="GO" id="GO:0005737">
    <property type="term" value="C:cytoplasm"/>
    <property type="evidence" value="ECO:0007669"/>
    <property type="project" value="UniProtKB-SubCell"/>
</dbReference>
<dbReference type="GO" id="GO:0004350">
    <property type="term" value="F:glutamate-5-semialdehyde dehydrogenase activity"/>
    <property type="evidence" value="ECO:0007669"/>
    <property type="project" value="UniProtKB-UniRule"/>
</dbReference>
<dbReference type="GO" id="GO:0050661">
    <property type="term" value="F:NADP binding"/>
    <property type="evidence" value="ECO:0007669"/>
    <property type="project" value="InterPro"/>
</dbReference>
<dbReference type="GO" id="GO:0055129">
    <property type="term" value="P:L-proline biosynthetic process"/>
    <property type="evidence" value="ECO:0007669"/>
    <property type="project" value="UniProtKB-UniRule"/>
</dbReference>
<dbReference type="CDD" id="cd07079">
    <property type="entry name" value="ALDH_F18-19_ProA-GPR"/>
    <property type="match status" value="1"/>
</dbReference>
<dbReference type="FunFam" id="3.40.309.10:FF:000006">
    <property type="entry name" value="Gamma-glutamyl phosphate reductase"/>
    <property type="match status" value="1"/>
</dbReference>
<dbReference type="Gene3D" id="3.40.605.10">
    <property type="entry name" value="Aldehyde Dehydrogenase, Chain A, domain 1"/>
    <property type="match status" value="1"/>
</dbReference>
<dbReference type="Gene3D" id="3.40.309.10">
    <property type="entry name" value="Aldehyde Dehydrogenase, Chain A, domain 2"/>
    <property type="match status" value="1"/>
</dbReference>
<dbReference type="HAMAP" id="MF_00412">
    <property type="entry name" value="ProA"/>
    <property type="match status" value="1"/>
</dbReference>
<dbReference type="InterPro" id="IPR016161">
    <property type="entry name" value="Ald_DH/histidinol_DH"/>
</dbReference>
<dbReference type="InterPro" id="IPR016163">
    <property type="entry name" value="Ald_DH_C"/>
</dbReference>
<dbReference type="InterPro" id="IPR016162">
    <property type="entry name" value="Ald_DH_N"/>
</dbReference>
<dbReference type="InterPro" id="IPR015590">
    <property type="entry name" value="Aldehyde_DH_dom"/>
</dbReference>
<dbReference type="InterPro" id="IPR020593">
    <property type="entry name" value="G-glutamylP_reductase_CS"/>
</dbReference>
<dbReference type="InterPro" id="IPR012134">
    <property type="entry name" value="Glu-5-SA_DH"/>
</dbReference>
<dbReference type="InterPro" id="IPR000965">
    <property type="entry name" value="GPR_dom"/>
</dbReference>
<dbReference type="NCBIfam" id="NF001221">
    <property type="entry name" value="PRK00197.1"/>
    <property type="match status" value="1"/>
</dbReference>
<dbReference type="NCBIfam" id="TIGR00407">
    <property type="entry name" value="proA"/>
    <property type="match status" value="1"/>
</dbReference>
<dbReference type="PANTHER" id="PTHR11063:SF8">
    <property type="entry name" value="DELTA-1-PYRROLINE-5-CARBOXYLATE SYNTHASE"/>
    <property type="match status" value="1"/>
</dbReference>
<dbReference type="PANTHER" id="PTHR11063">
    <property type="entry name" value="GLUTAMATE SEMIALDEHYDE DEHYDROGENASE"/>
    <property type="match status" value="1"/>
</dbReference>
<dbReference type="Pfam" id="PF00171">
    <property type="entry name" value="Aldedh"/>
    <property type="match status" value="2"/>
</dbReference>
<dbReference type="PIRSF" id="PIRSF000151">
    <property type="entry name" value="GPR"/>
    <property type="match status" value="1"/>
</dbReference>
<dbReference type="SUPFAM" id="SSF53720">
    <property type="entry name" value="ALDH-like"/>
    <property type="match status" value="1"/>
</dbReference>
<dbReference type="PROSITE" id="PS01223">
    <property type="entry name" value="PROA"/>
    <property type="match status" value="1"/>
</dbReference>
<name>PROA_STRA3</name>
<accession>Q8E783</accession>
<keyword id="KW-0028">Amino-acid biosynthesis</keyword>
<keyword id="KW-0963">Cytoplasm</keyword>
<keyword id="KW-0521">NADP</keyword>
<keyword id="KW-0560">Oxidoreductase</keyword>
<keyword id="KW-0641">Proline biosynthesis</keyword>
<reference key="1">
    <citation type="journal article" date="2002" name="Mol. Microbiol.">
        <title>Genome sequence of Streptococcus agalactiae, a pathogen causing invasive neonatal disease.</title>
        <authorList>
            <person name="Glaser P."/>
            <person name="Rusniok C."/>
            <person name="Buchrieser C."/>
            <person name="Chevalier F."/>
            <person name="Frangeul L."/>
            <person name="Msadek T."/>
            <person name="Zouine M."/>
            <person name="Couve E."/>
            <person name="Lalioui L."/>
            <person name="Poyart C."/>
            <person name="Trieu-Cuot P."/>
            <person name="Kunst F."/>
        </authorList>
    </citation>
    <scope>NUCLEOTIDE SEQUENCE [LARGE SCALE GENOMIC DNA]</scope>
    <source>
        <strain>NEM316</strain>
    </source>
</reference>
<sequence length="417" mass="45542">MTYIEILGQNAKKASQSVARLSTASKNEILRDLARNIVADTETILTENARDVAKAKDNGISEIMVDRLRLNKDRIQAIANGIYQVADLADPIGQVVSGYTNLDGLKILKKRVPLGVIAMIFESRPNVSVDAFSLAFKTGNAIILRGGKDAIFSNTALVNCMRQTLQDTGHNPDIVQLVEDTSHVVAEELMQATDYVDVLIPRGGAKLIQTVKEKSKIPVIETGVGNVHIYIDEFADLDMAAKIVINAKTQRPSVCNAAEGLVVHQAIAKGFLSQLEKMLKESNQSVEFRADEEALQLLENAVAASESDYATEFLDYIMSVKVVDSFEQAISWINKYSSHHSEAIITNNISRAEIFQDMVDAAAVYVNASTRFTDGFVFGLGAEIGISTQKLHARGPMGLEALTSTKYYINGTGQVRE</sequence>